<evidence type="ECO:0000250" key="1">
    <source>
        <dbReference type="UniProtKB" id="P78536"/>
    </source>
</evidence>
<evidence type="ECO:0000255" key="2"/>
<evidence type="ECO:0000255" key="3">
    <source>
        <dbReference type="PROSITE-ProRule" id="PRU00068"/>
    </source>
</evidence>
<evidence type="ECO:0000255" key="4">
    <source>
        <dbReference type="PROSITE-ProRule" id="PRU00276"/>
    </source>
</evidence>
<evidence type="ECO:0000255" key="5">
    <source>
        <dbReference type="PROSITE-ProRule" id="PRU00498"/>
    </source>
</evidence>
<evidence type="ECO:0000269" key="6">
    <source>
    </source>
</evidence>
<evidence type="ECO:0000305" key="7"/>
<evidence type="ECO:0000312" key="8">
    <source>
        <dbReference type="Proteomes" id="UP000001940"/>
    </source>
</evidence>
<evidence type="ECO:0000312" key="9">
    <source>
        <dbReference type="WormBase" id="ZK154.7"/>
    </source>
</evidence>
<proteinExistence type="inferred from homology"/>
<dbReference type="EC" id="3.4.24.-" evidence="1"/>
<dbReference type="EMBL" id="BX284606">
    <property type="protein sequence ID" value="CCD67563.1"/>
    <property type="molecule type" value="Genomic_DNA"/>
</dbReference>
<dbReference type="PIR" id="T25987">
    <property type="entry name" value="T25987"/>
</dbReference>
<dbReference type="RefSeq" id="NP_509318.1">
    <property type="nucleotide sequence ID" value="NM_076917.7"/>
</dbReference>
<dbReference type="SMR" id="Q94316"/>
<dbReference type="FunCoup" id="Q94316">
    <property type="interactions" value="2229"/>
</dbReference>
<dbReference type="STRING" id="6239.ZK154.7.1"/>
<dbReference type="GlyCosmos" id="Q94316">
    <property type="glycosylation" value="5 sites, No reported glycans"/>
</dbReference>
<dbReference type="PaxDb" id="6239-ZK154.7"/>
<dbReference type="EnsemblMetazoa" id="ZK154.7.1">
    <property type="protein sequence ID" value="ZK154.7.1"/>
    <property type="gene ID" value="WBGene00000075"/>
</dbReference>
<dbReference type="GeneID" id="181041"/>
<dbReference type="KEGG" id="cel:CELE_ZK154.7"/>
<dbReference type="UCSC" id="ZK154.7">
    <property type="organism name" value="c. elegans"/>
</dbReference>
<dbReference type="AGR" id="WB:WBGene00000075"/>
<dbReference type="CTD" id="181041"/>
<dbReference type="WormBase" id="ZK154.7">
    <property type="protein sequence ID" value="CE15265"/>
    <property type="gene ID" value="WBGene00000075"/>
    <property type="gene designation" value="adm-4"/>
</dbReference>
<dbReference type="eggNOG" id="KOG3658">
    <property type="taxonomic scope" value="Eukaryota"/>
</dbReference>
<dbReference type="GeneTree" id="ENSGT00940000155443"/>
<dbReference type="HOGENOM" id="CLU_004602_2_1_1"/>
<dbReference type="InParanoid" id="Q94316"/>
<dbReference type="OMA" id="EHDPDIT"/>
<dbReference type="OrthoDB" id="2131567at2759"/>
<dbReference type="PhylomeDB" id="Q94316"/>
<dbReference type="SignaLink" id="Q94316"/>
<dbReference type="PRO" id="PR:Q94316"/>
<dbReference type="Proteomes" id="UP000001940">
    <property type="component" value="Chromosome X"/>
</dbReference>
<dbReference type="Bgee" id="WBGene00000075">
    <property type="expression patterns" value="Expressed in germ line (C elegans) and 4 other cell types or tissues"/>
</dbReference>
<dbReference type="GO" id="GO:0005886">
    <property type="term" value="C:plasma membrane"/>
    <property type="evidence" value="ECO:0000318"/>
    <property type="project" value="GO_Central"/>
</dbReference>
<dbReference type="GO" id="GO:0046872">
    <property type="term" value="F:metal ion binding"/>
    <property type="evidence" value="ECO:0007669"/>
    <property type="project" value="UniProtKB-KW"/>
</dbReference>
<dbReference type="GO" id="GO:0004222">
    <property type="term" value="F:metalloendopeptidase activity"/>
    <property type="evidence" value="ECO:0000318"/>
    <property type="project" value="GO_Central"/>
</dbReference>
<dbReference type="GO" id="GO:0001708">
    <property type="term" value="P:cell fate specification"/>
    <property type="evidence" value="ECO:0000316"/>
    <property type="project" value="WormBase"/>
</dbReference>
<dbReference type="GO" id="GO:0006509">
    <property type="term" value="P:membrane protein ectodomain proteolysis"/>
    <property type="evidence" value="ECO:0000250"/>
    <property type="project" value="WormBase"/>
</dbReference>
<dbReference type="GO" id="GO:0007219">
    <property type="term" value="P:Notch signaling pathway"/>
    <property type="evidence" value="ECO:0000316"/>
    <property type="project" value="WormBase"/>
</dbReference>
<dbReference type="CDD" id="cd14246">
    <property type="entry name" value="ADAM17_MPD"/>
    <property type="match status" value="1"/>
</dbReference>
<dbReference type="CDD" id="cd04270">
    <property type="entry name" value="ZnMc_TACE_like"/>
    <property type="match status" value="1"/>
</dbReference>
<dbReference type="FunFam" id="4.10.70.10:FF:000003">
    <property type="entry name" value="Disintegrin and metalloproteinase domain-containing protein 17"/>
    <property type="match status" value="1"/>
</dbReference>
<dbReference type="Gene3D" id="4.10.70.30">
    <property type="match status" value="1"/>
</dbReference>
<dbReference type="Gene3D" id="3.40.390.10">
    <property type="entry name" value="Collagenase (Catalytic Domain)"/>
    <property type="match status" value="1"/>
</dbReference>
<dbReference type="Gene3D" id="4.10.70.10">
    <property type="entry name" value="Disintegrin domain"/>
    <property type="match status" value="1"/>
</dbReference>
<dbReference type="InterPro" id="IPR034025">
    <property type="entry name" value="ADAM10_ADAM17"/>
</dbReference>
<dbReference type="InterPro" id="IPR032029">
    <property type="entry name" value="ADAM17_MPD"/>
</dbReference>
<dbReference type="InterPro" id="IPR051489">
    <property type="entry name" value="ADAM_Metalloproteinase"/>
</dbReference>
<dbReference type="InterPro" id="IPR001762">
    <property type="entry name" value="Disintegrin_dom"/>
</dbReference>
<dbReference type="InterPro" id="IPR036436">
    <property type="entry name" value="Disintegrin_dom_sf"/>
</dbReference>
<dbReference type="InterPro" id="IPR024079">
    <property type="entry name" value="MetalloPept_cat_dom_sf"/>
</dbReference>
<dbReference type="InterPro" id="IPR001590">
    <property type="entry name" value="Peptidase_M12B"/>
</dbReference>
<dbReference type="PANTHER" id="PTHR45702">
    <property type="entry name" value="ADAM10/ADAM17 METALLOPEPTIDASE FAMILY MEMBER"/>
    <property type="match status" value="1"/>
</dbReference>
<dbReference type="PANTHER" id="PTHR45702:SF6">
    <property type="entry name" value="DISINTEGRIN AND METALLOPROTEINASE DOMAIN-CONTAINING PROTEIN 17"/>
    <property type="match status" value="1"/>
</dbReference>
<dbReference type="Pfam" id="PF16698">
    <property type="entry name" value="ADAM17_MPD"/>
    <property type="match status" value="1"/>
</dbReference>
<dbReference type="Pfam" id="PF00200">
    <property type="entry name" value="Disintegrin"/>
    <property type="match status" value="1"/>
</dbReference>
<dbReference type="Pfam" id="PF13574">
    <property type="entry name" value="Reprolysin_2"/>
    <property type="match status" value="1"/>
</dbReference>
<dbReference type="SMART" id="SM00050">
    <property type="entry name" value="DISIN"/>
    <property type="match status" value="1"/>
</dbReference>
<dbReference type="SUPFAM" id="SSF57552">
    <property type="entry name" value="Blood coagulation inhibitor (disintegrin)"/>
    <property type="match status" value="1"/>
</dbReference>
<dbReference type="SUPFAM" id="SSF55486">
    <property type="entry name" value="Metalloproteases ('zincins'), catalytic domain"/>
    <property type="match status" value="1"/>
</dbReference>
<dbReference type="PROSITE" id="PS50215">
    <property type="entry name" value="ADAM_MEPRO"/>
    <property type="match status" value="1"/>
</dbReference>
<dbReference type="PROSITE" id="PS50214">
    <property type="entry name" value="DISINTEGRIN_2"/>
    <property type="match status" value="1"/>
</dbReference>
<dbReference type="PROSITE" id="PS00142">
    <property type="entry name" value="ZINC_PROTEASE"/>
    <property type="match status" value="1"/>
</dbReference>
<name>ADA17_CAEEL</name>
<reference evidence="8" key="1">
    <citation type="journal article" date="1998" name="Science">
        <title>Genome sequence of the nematode C. elegans: a platform for investigating biology.</title>
        <authorList>
            <consortium name="The C. elegans sequencing consortium"/>
        </authorList>
    </citation>
    <scope>NUCLEOTIDE SEQUENCE [LARGE SCALE GENOMIC DNA]</scope>
    <source>
        <strain evidence="8">Bristol N2</strain>
    </source>
</reference>
<reference evidence="7" key="2">
    <citation type="journal article" date="2005" name="Dev. Biol.">
        <title>Evidence for functional redundancy between C. elegans ADAM proteins SUP-17/Kuzbanian and ADM-4/TACE.</title>
        <authorList>
            <person name="Jarriault S."/>
            <person name="Greenwald I."/>
        </authorList>
    </citation>
    <scope>FUNCTION</scope>
    <scope>DISRUPTION PHENOTYPE</scope>
</reference>
<accession>Q94316</accession>
<organism evidence="8">
    <name type="scientific">Caenorhabditis elegans</name>
    <dbReference type="NCBI Taxonomy" id="6239"/>
    <lineage>
        <taxon>Eukaryota</taxon>
        <taxon>Metazoa</taxon>
        <taxon>Ecdysozoa</taxon>
        <taxon>Nematoda</taxon>
        <taxon>Chromadorea</taxon>
        <taxon>Rhabditida</taxon>
        <taxon>Rhabditina</taxon>
        <taxon>Rhabditomorpha</taxon>
        <taxon>Rhabditoidea</taxon>
        <taxon>Rhabditidae</taxon>
        <taxon>Peloderinae</taxon>
        <taxon>Caenorhabditis</taxon>
    </lineage>
</organism>
<protein>
    <recommendedName>
        <fullName evidence="7">Disintegrin and metalloproteinase domain-containing protein 17 homolog</fullName>
        <shortName evidence="7">ADAM 17 homolog</shortName>
        <ecNumber evidence="1">3.4.24.-</ecNumber>
    </recommendedName>
</protein>
<feature type="signal peptide" evidence="2">
    <location>
        <begin position="1"/>
        <end position="21"/>
    </location>
</feature>
<feature type="propeptide" id="PRO_0000441399" evidence="1">
    <location>
        <begin position="22"/>
        <end position="177"/>
    </location>
</feature>
<feature type="chain" id="PRO_5004320479" description="Disintegrin and metalloproteinase domain-containing protein 17 homolog" evidence="2">
    <location>
        <begin position="178"/>
        <end position="686"/>
    </location>
</feature>
<feature type="topological domain" description="Extracellular" evidence="7">
    <location>
        <begin position="178"/>
        <end position="637"/>
    </location>
</feature>
<feature type="transmembrane region" description="Helical" evidence="2">
    <location>
        <begin position="638"/>
        <end position="658"/>
    </location>
</feature>
<feature type="topological domain" description="Cytoplasmic" evidence="7">
    <location>
        <begin position="659"/>
        <end position="686"/>
    </location>
</feature>
<feature type="domain" description="Peptidase M12B" evidence="4">
    <location>
        <begin position="187"/>
        <end position="445"/>
    </location>
</feature>
<feature type="domain" description="Disintegrin" evidence="3">
    <location>
        <begin position="446"/>
        <end position="535"/>
    </location>
</feature>
<feature type="active site" evidence="4">
    <location>
        <position position="371"/>
    </location>
</feature>
<feature type="binding site" evidence="4">
    <location>
        <position position="370"/>
    </location>
    <ligand>
        <name>Zn(2+)</name>
        <dbReference type="ChEBI" id="CHEBI:29105"/>
        <note>catalytic</note>
    </ligand>
</feature>
<feature type="binding site" evidence="4">
    <location>
        <position position="374"/>
    </location>
    <ligand>
        <name>Zn(2+)</name>
        <dbReference type="ChEBI" id="CHEBI:29105"/>
        <note>catalytic</note>
    </ligand>
</feature>
<feature type="binding site" evidence="4">
    <location>
        <position position="380"/>
    </location>
    <ligand>
        <name>Zn(2+)</name>
        <dbReference type="ChEBI" id="CHEBI:29105"/>
        <note>catalytic</note>
    </ligand>
</feature>
<feature type="glycosylation site" description="N-linked (GlcNAc...) asparagine" evidence="5">
    <location>
        <position position="59"/>
    </location>
</feature>
<feature type="glycosylation site" description="N-linked (GlcNAc...) asparagine" evidence="5">
    <location>
        <position position="206"/>
    </location>
</feature>
<feature type="glycosylation site" description="N-linked (GlcNAc...) asparagine" evidence="5">
    <location>
        <position position="262"/>
    </location>
</feature>
<feature type="glycosylation site" description="N-linked (GlcNAc...) asparagine" evidence="5">
    <location>
        <position position="501"/>
    </location>
</feature>
<feature type="glycosylation site" description="N-linked (GlcNAc...) asparagine" evidence="5">
    <location>
        <position position="581"/>
    </location>
</feature>
<feature type="disulfide bond" evidence="4">
    <location>
        <begin position="328"/>
        <end position="440"/>
    </location>
</feature>
<feature type="disulfide bond" evidence="4">
    <location>
        <begin position="394"/>
        <end position="424"/>
    </location>
</feature>
<feature type="disulfide bond" evidence="3">
    <location>
        <begin position="506"/>
        <end position="527"/>
    </location>
</feature>
<sequence>MKIQDRSLLIFLVLGILKSDAFNTRVKRHAPIRFQRSTRQSVVHFEFLDQEYVVDLEPNHSTFHENFKVFTQDGPQIVPRDEYIGTVREPRAGRAVLTQLEENVYIGSLYFVDDTLHLEPSYPHQLSDDLGPVVGYFESDLDLNLDLSAMPVRNQVSFRRANPFLKHRRAIAIPSDRRKDVLNVKRNRCTLKLVADYSFYSIFGKNNTGIVTKFLVNMIARVNEIYTPINWDVGKEDDISGRGRFQNMGFSIKEIKVLDRPNASDSHYNSYSRIWEVERLLREFAFAEGSKDFCLVHLVTARTFREVATLGLAYVSYKKWDETAGGICSKQETFNGRVAYINVLLSTSFANSEQSTYPLITKEIDIVVSHEYGHAWGATHDPTIDSDDPDVEECSPNDQNGGKYLMSQYAQKGYDANNVLFSPCSRKLIRDVLIGKWESCFQEEMTSFCGNGIVEDGEECDNGVDTDNEFNCCDKFCRLAVGAKCSPLNHICCTPTCQFHNSTHVCLPGDSLLCKADAVCNGFSGECPSAPPVRDGQECLEGGECLNGVCLPFCEKMSIGKKSCICEDLELSCRLCCRDYNGTCAPVPGHVYLRDGVRCSKGSCRDRKCVNEVVDNVRNYFLITFQTTGGVLEFIKTHIVVIAIIFFTLIFVGIYKIVKYGENFTEKVTHKTAGGCRSVFVKADVN</sequence>
<comment type="function">
    <text evidence="1 6">Metalloprotease (By similarity). Acts together with protease sup-17 to facilitate lin-12/Notch signaling during developmental cell fate decision, including anchor cell/ventral uterine precursor cell decision (PubMed:16197940). By modulating glp-1/Notch signaling, plays a role in germline development (PubMed:16197940).</text>
</comment>
<comment type="cofactor">
    <cofactor evidence="1">
        <name>Zn(2+)</name>
        <dbReference type="ChEBI" id="CHEBI:29105"/>
    </cofactor>
    <text evidence="1">Binds 1 zinc ion per subunit.</text>
</comment>
<comment type="subcellular location">
    <subcellularLocation>
        <location evidence="7">Cell membrane</location>
        <topology evidence="7">Single-pass type I membrane protein</topology>
    </subcellularLocation>
</comment>
<comment type="disruption phenotype">
    <text evidence="6">RNAi-mediated knockdown in a sup-17 (n1258) mutant background causes sterility with abnormal oocytes containing endoreduplicated DNA and impaired spermatheca function, and production of 2 anchor cells. RNAi-mediated knockdown in a glp-1 (ar202) constitutively active mutant background restores fertility.</text>
</comment>
<keyword id="KW-1003">Cell membrane</keyword>
<keyword id="KW-0165">Cleavage on pair of basic residues</keyword>
<keyword id="KW-1015">Disulfide bond</keyword>
<keyword id="KW-0325">Glycoprotein</keyword>
<keyword id="KW-0378">Hydrolase</keyword>
<keyword id="KW-0472">Membrane</keyword>
<keyword id="KW-0479">Metal-binding</keyword>
<keyword id="KW-0482">Metalloprotease</keyword>
<keyword id="KW-0645">Protease</keyword>
<keyword id="KW-1185">Reference proteome</keyword>
<keyword id="KW-0732">Signal</keyword>
<keyword id="KW-0812">Transmembrane</keyword>
<keyword id="KW-1133">Transmembrane helix</keyword>
<keyword id="KW-0862">Zinc</keyword>
<keyword id="KW-0865">Zymogen</keyword>
<gene>
    <name evidence="9" type="primary">adm-4</name>
    <name evidence="9" type="ORF">ZK154.7</name>
</gene>